<organism>
    <name type="scientific">Bombyx mori</name>
    <name type="common">Silk moth</name>
    <dbReference type="NCBI Taxonomy" id="7091"/>
    <lineage>
        <taxon>Eukaryota</taxon>
        <taxon>Metazoa</taxon>
        <taxon>Ecdysozoa</taxon>
        <taxon>Arthropoda</taxon>
        <taxon>Hexapoda</taxon>
        <taxon>Insecta</taxon>
        <taxon>Pterygota</taxon>
        <taxon>Neoptera</taxon>
        <taxon>Endopterygota</taxon>
        <taxon>Lepidoptera</taxon>
        <taxon>Glossata</taxon>
        <taxon>Ditrysia</taxon>
        <taxon>Bombycoidea</taxon>
        <taxon>Bombycidae</taxon>
        <taxon>Bombycinae</taxon>
        <taxon>Bombyx</taxon>
    </lineage>
</organism>
<proteinExistence type="evidence at protein level"/>
<name>EF1B2_BOMMO</name>
<dbReference type="EMBL" id="D13339">
    <property type="protein sequence ID" value="BAA02602.1"/>
    <property type="molecule type" value="mRNA"/>
</dbReference>
<dbReference type="PIR" id="S35514">
    <property type="entry name" value="S35514"/>
</dbReference>
<dbReference type="RefSeq" id="NP_001037556.1">
    <property type="nucleotide sequence ID" value="NM_001044091.1"/>
</dbReference>
<dbReference type="SMR" id="P29522"/>
<dbReference type="FunCoup" id="P29522">
    <property type="interactions" value="1535"/>
</dbReference>
<dbReference type="STRING" id="7091.P29522"/>
<dbReference type="PaxDb" id="7091-BGIBMGA008921-TA"/>
<dbReference type="EnsemblMetazoa" id="NM_001044091.1">
    <property type="protein sequence ID" value="NP_001037556.1"/>
    <property type="gene ID" value="GeneID_693119"/>
</dbReference>
<dbReference type="GeneID" id="693119"/>
<dbReference type="KEGG" id="bmor:693119"/>
<dbReference type="CTD" id="45249"/>
<dbReference type="eggNOG" id="KOG1668">
    <property type="taxonomic scope" value="Eukaryota"/>
</dbReference>
<dbReference type="HOGENOM" id="CLU_050172_0_2_1"/>
<dbReference type="InParanoid" id="P29522"/>
<dbReference type="OrthoDB" id="527867at7088"/>
<dbReference type="Proteomes" id="UP000005204">
    <property type="component" value="Unassembled WGS sequence"/>
</dbReference>
<dbReference type="GO" id="GO:0005829">
    <property type="term" value="C:cytosol"/>
    <property type="evidence" value="ECO:0007669"/>
    <property type="project" value="TreeGrafter"/>
</dbReference>
<dbReference type="GO" id="GO:0005853">
    <property type="term" value="C:eukaryotic translation elongation factor 1 complex"/>
    <property type="evidence" value="ECO:0007669"/>
    <property type="project" value="InterPro"/>
</dbReference>
<dbReference type="GO" id="GO:0005085">
    <property type="term" value="F:guanyl-nucleotide exchange factor activity"/>
    <property type="evidence" value="ECO:0007669"/>
    <property type="project" value="TreeGrafter"/>
</dbReference>
<dbReference type="GO" id="GO:0003746">
    <property type="term" value="F:translation elongation factor activity"/>
    <property type="evidence" value="ECO:0007669"/>
    <property type="project" value="UniProtKB-KW"/>
</dbReference>
<dbReference type="CDD" id="cd00292">
    <property type="entry name" value="EF1B"/>
    <property type="match status" value="1"/>
</dbReference>
<dbReference type="CDD" id="cd10308">
    <property type="entry name" value="GST_C_eEF1b_like"/>
    <property type="match status" value="1"/>
</dbReference>
<dbReference type="FunFam" id="3.30.70.60:FF:000001">
    <property type="entry name" value="Elongation factor 1-beta 1 like"/>
    <property type="match status" value="1"/>
</dbReference>
<dbReference type="Gene3D" id="1.20.1050.130">
    <property type="match status" value="1"/>
</dbReference>
<dbReference type="Gene3D" id="3.30.70.60">
    <property type="match status" value="1"/>
</dbReference>
<dbReference type="InterPro" id="IPR053836">
    <property type="entry name" value="Arc1-like_N"/>
</dbReference>
<dbReference type="InterPro" id="IPR036219">
    <property type="entry name" value="eEF-1beta-like_sf"/>
</dbReference>
<dbReference type="InterPro" id="IPR018940">
    <property type="entry name" value="EF-1_beta_acid_region_euk"/>
</dbReference>
<dbReference type="InterPro" id="IPR049720">
    <property type="entry name" value="EF1B_bsu/dsu"/>
</dbReference>
<dbReference type="InterPro" id="IPR014038">
    <property type="entry name" value="EF1B_bsu/dsu_GNE"/>
</dbReference>
<dbReference type="InterPro" id="IPR036282">
    <property type="entry name" value="Glutathione-S-Trfase_C_sf"/>
</dbReference>
<dbReference type="InterPro" id="IPR014717">
    <property type="entry name" value="Transl_elong_EF1B/ribsomal_bS6"/>
</dbReference>
<dbReference type="InterPro" id="IPR001326">
    <property type="entry name" value="Transl_elong_EF1B_B/D_CS"/>
</dbReference>
<dbReference type="PANTHER" id="PTHR11595">
    <property type="entry name" value="EF-HAND AND COILED-COIL DOMAIN-CONTAINING FAMILY MEMBER"/>
    <property type="match status" value="1"/>
</dbReference>
<dbReference type="PANTHER" id="PTHR11595:SF21">
    <property type="entry name" value="ELONGATION FACTOR 1-BETA"/>
    <property type="match status" value="1"/>
</dbReference>
<dbReference type="Pfam" id="PF21972">
    <property type="entry name" value="Arc1p_N_like"/>
    <property type="match status" value="1"/>
</dbReference>
<dbReference type="Pfam" id="PF10587">
    <property type="entry name" value="EF-1_beta_acid"/>
    <property type="match status" value="1"/>
</dbReference>
<dbReference type="Pfam" id="PF00736">
    <property type="entry name" value="EF1_GNE"/>
    <property type="match status" value="1"/>
</dbReference>
<dbReference type="SMART" id="SM01182">
    <property type="entry name" value="EF-1_beta_acid"/>
    <property type="match status" value="1"/>
</dbReference>
<dbReference type="SMART" id="SM00888">
    <property type="entry name" value="EF1_GNE"/>
    <property type="match status" value="1"/>
</dbReference>
<dbReference type="SUPFAM" id="SSF54984">
    <property type="entry name" value="eEF-1beta-like"/>
    <property type="match status" value="1"/>
</dbReference>
<dbReference type="SUPFAM" id="SSF47616">
    <property type="entry name" value="GST C-terminal domain-like"/>
    <property type="match status" value="1"/>
</dbReference>
<dbReference type="PROSITE" id="PS00824">
    <property type="entry name" value="EF1BD_1"/>
    <property type="match status" value="1"/>
</dbReference>
<dbReference type="PROSITE" id="PS00825">
    <property type="entry name" value="EF1BD_2"/>
    <property type="match status" value="1"/>
</dbReference>
<feature type="initiator methionine" description="Removed" evidence="2">
    <location>
        <position position="1"/>
    </location>
</feature>
<feature type="chain" id="PRO_0000155029" description="Elongation factor 1-beta'">
    <location>
        <begin position="2"/>
        <end position="222"/>
    </location>
</feature>
<feature type="region of interest" description="Disordered" evidence="1">
    <location>
        <begin position="71"/>
        <end position="113"/>
    </location>
</feature>
<feature type="compositionally biased region" description="Low complexity" evidence="1">
    <location>
        <begin position="78"/>
        <end position="89"/>
    </location>
</feature>
<feature type="compositionally biased region" description="Acidic residues" evidence="1">
    <location>
        <begin position="92"/>
        <end position="111"/>
    </location>
</feature>
<evidence type="ECO:0000256" key="1">
    <source>
        <dbReference type="SAM" id="MobiDB-lite"/>
    </source>
</evidence>
<evidence type="ECO:0000269" key="2">
    <source>
    </source>
</evidence>
<evidence type="ECO:0000305" key="3"/>
<comment type="function">
    <text>EF-1-beta and EF-1-beta' stimulate the exchange of GDP bound to EF-1-alpha to GTP.</text>
</comment>
<comment type="subunit">
    <text>EF-1 is composed of 4 subunits: alpha, beta, beta' and gamma.</text>
</comment>
<comment type="PTM">
    <text>Phosphorylated.</text>
</comment>
<comment type="similarity">
    <text evidence="3">Belongs to the EF-1-beta/EF-1-delta family.</text>
</comment>
<reference key="1">
    <citation type="journal article" date="1992" name="Nucleic Acids Res.">
        <title>Nucleotide sequence of the cDNA encoding silk gland elongation factor 1 beta'.</title>
        <authorList>
            <person name="Taira H."/>
            <person name="Kamiie K."/>
            <person name="Kakuta A."/>
            <person name="Ooura H."/>
            <person name="Matsumoto S."/>
            <person name="Ejiri S."/>
            <person name="Katsumata T."/>
        </authorList>
    </citation>
    <scope>NUCLEOTIDE SEQUENCE [MRNA]</scope>
    <scope>PROTEIN SEQUENCE OF 2-34</scope>
</reference>
<sequence>MAVGDVKTAQGLNDLNQYLAEKSYVSGYTPSQADVQVFEQVGKAPAANLPHVLRWYNQIASYTSAERKTWSQGTSPLTAGAKPTAPAPAAKDDDDDDVDLFGSGDEEEDAEAERIREERLKAYADKKSKKPALIAKSSILLDVKPWDDETDMKEMENQVRTIEMEGLLWGASKLVPVGYGINKLQIMCVIEDDKVSVDLLTEKIQEFEDFVQSVDIAAFNKI</sequence>
<accession>P29522</accession>
<protein>
    <recommendedName>
        <fullName>Elongation factor 1-beta'</fullName>
    </recommendedName>
</protein>
<keyword id="KW-0903">Direct protein sequencing</keyword>
<keyword id="KW-0251">Elongation factor</keyword>
<keyword id="KW-0597">Phosphoprotein</keyword>
<keyword id="KW-0648">Protein biosynthesis</keyword>
<keyword id="KW-1185">Reference proteome</keyword>